<name>M4K2_HUMAN</name>
<protein>
    <recommendedName>
        <fullName>Mitogen-activated protein kinase kinase kinase kinase 2</fullName>
        <ecNumber evidence="10">2.7.11.1</ecNumber>
    </recommendedName>
    <alternativeName>
        <fullName>B lymphocyte serine/threonine-protein kinase</fullName>
    </alternativeName>
    <alternativeName>
        <fullName>Germinal center kinase</fullName>
        <shortName>GC kinase</shortName>
    </alternativeName>
    <alternativeName>
        <fullName>MAPK/ERK kinase kinase kinase 2</fullName>
        <shortName>MEK kinase kinase 2</shortName>
        <shortName>MEKKK 2</shortName>
    </alternativeName>
    <alternativeName>
        <fullName>Rab8-interacting protein</fullName>
    </alternativeName>
</protein>
<comment type="function">
    <text evidence="5 6 7 8 9 10 11">Serine/threonine-protein kinase which acts as an essential component of the MAP kinase signal transduction pathway. Acts as a MAPK kinase kinase kinase (MAP4K) and is an upstream activator of the stress-activated protein kinase/c-Jun N-terminal kinase (SAP/JNK) signaling pathway and to a lesser extent of the p38 MAPKs signaling pathway. Required for the efficient activation of JNKs by TRAF6-dependent stimuli, including pathogen-associated molecular patterns (PAMPs) such as polyinosine-polycytidine (poly(IC)), lipopolysaccharides (LPS), lipid A, peptidoglycan (PGN), or bacterial flagellin. To a lesser degree, IL-1 and engagement of CD40 also stimulate MAP4K2-mediated JNKs activation. The requirement for MAP4K2/GCK is most pronounced for LPS signaling, and extends to LPS stimulation of c-Jun phosphorylation and induction of IL-8. Enhances MAP3K1 oligomerization, which may relieve N-terminal mediated MAP3K1 autoinhibition and lead to activation following autophosphorylation. Also mediates the SAP/JNK signaling pathway and the p38 MAPKs signaling pathway through activation of the MAP3Ks MAP3K10/MLK2 and MAP3K11/MLK3. May play a role in the regulation of vesicle targeting or fusion. regulation of vesicle targeting or fusion. Activator of the Hippo signaling pathway which plays a pivotal role in organ size control and tumor suppression by restricting proliferation and promoting apoptosis. MAP4Ks act in parallel to and are partially redundant with STK3/MST2 and STK4/MST2 in the phosphorylation and activation of LATS1/2, and establish MAP4Ks as components of the expanded Hippo pathway (PubMed:26437443).</text>
</comment>
<comment type="catalytic activity">
    <reaction evidence="10">
        <text>L-seryl-[protein] + ATP = O-phospho-L-seryl-[protein] + ADP + H(+)</text>
        <dbReference type="Rhea" id="RHEA:17989"/>
        <dbReference type="Rhea" id="RHEA-COMP:9863"/>
        <dbReference type="Rhea" id="RHEA-COMP:11604"/>
        <dbReference type="ChEBI" id="CHEBI:15378"/>
        <dbReference type="ChEBI" id="CHEBI:29999"/>
        <dbReference type="ChEBI" id="CHEBI:30616"/>
        <dbReference type="ChEBI" id="CHEBI:83421"/>
        <dbReference type="ChEBI" id="CHEBI:456216"/>
        <dbReference type="EC" id="2.7.11.1"/>
    </reaction>
</comment>
<comment type="catalytic activity">
    <reaction evidence="10">
        <text>L-threonyl-[protein] + ATP = O-phospho-L-threonyl-[protein] + ADP + H(+)</text>
        <dbReference type="Rhea" id="RHEA:46608"/>
        <dbReference type="Rhea" id="RHEA-COMP:11060"/>
        <dbReference type="Rhea" id="RHEA-COMP:11605"/>
        <dbReference type="ChEBI" id="CHEBI:15378"/>
        <dbReference type="ChEBI" id="CHEBI:30013"/>
        <dbReference type="ChEBI" id="CHEBI:30616"/>
        <dbReference type="ChEBI" id="CHEBI:61977"/>
        <dbReference type="ChEBI" id="CHEBI:456216"/>
        <dbReference type="EC" id="2.7.11.1"/>
    </reaction>
</comment>
<comment type="cofactor">
    <cofactor evidence="10">
        <name>Mg(2+)</name>
        <dbReference type="ChEBI" id="CHEBI:18420"/>
    </cofactor>
</comment>
<comment type="activity regulation">
    <text evidence="6 9">The tumor necrosis factor (TNF), as well as endotoxins and pro-inflammatory stimuli such as polyinosine-polycytidine (poly(IC)), lipopolysaccharides (LPS), peptidoglycan (PGN), flagellin, or lipid A activate MAP4K2 by promoting its autophosphorylation.</text>
</comment>
<comment type="subunit">
    <text evidence="1">Interacts with TRAF2, TRAF6, MAP3K1/MEKK1 and MAP3K11/MLK3. Interacts with RAB8A (By similarity).</text>
</comment>
<comment type="interaction">
    <interactant intactId="EBI-49783">
        <id>Q12851</id>
    </interactant>
    <interactant intactId="EBI-49776">
        <id>Q13233</id>
        <label>MAP3K1</label>
    </interactant>
    <organismsDiffer>false</organismsDiffer>
    <experiments>2</experiments>
</comment>
<comment type="interaction">
    <interactant intactId="EBI-49783">
        <id>Q12851</id>
    </interactant>
    <interactant intactId="EBI-752420">
        <id>Q9NUX5</id>
        <label>POT1</label>
    </interactant>
    <organismsDiffer>false</organismsDiffer>
    <experiments>2</experiments>
</comment>
<comment type="subcellular location">
    <subcellularLocation>
        <location evidence="1">Cytoplasm</location>
    </subcellularLocation>
    <subcellularLocation>
        <location evidence="1">Basolateral cell membrane</location>
        <topology evidence="1">Peripheral membrane protein</topology>
    </subcellularLocation>
    <subcellularLocation>
        <location evidence="1">Golgi apparatus membrane</location>
        <topology evidence="1">Peripheral membrane protein</topology>
    </subcellularLocation>
</comment>
<comment type="alternative products">
    <event type="alternative splicing"/>
    <isoform>
        <id>Q12851-1</id>
        <name>1</name>
        <sequence type="displayed"/>
    </isoform>
    <isoform>
        <id>Q12851-2</id>
        <name>2</name>
        <sequence type="described" ref="VSP_054134"/>
    </isoform>
</comment>
<comment type="tissue specificity">
    <text evidence="10">Highly expressed in germinal center but not mantle zone B-cells. Also expressed in lung, brain and placenta and at lower levels in other tissues examined.</text>
</comment>
<comment type="domain">
    <text evidence="10">The PEST domains are Pro-, Glu-, Ser-, and Thr-rich domains. Proteins with PEST domains are frequently targets of degradation by the ubiquitin proteasome.</text>
</comment>
<comment type="PTM">
    <text evidence="6">Polyubiquitinated through 'Lys-48'-polyubiquitin chains, allowing proteasomal turnover. Ubiquitination requires the kinase activity of MAP4K2/GCK.</text>
</comment>
<comment type="PTM">
    <text>Autophosphorylated in response to tumor necrosis factor (TNF), endotoxins or pro-inflammatory stimuli. Autophosphorylation leads to activation.</text>
</comment>
<comment type="similarity">
    <text evidence="13">Belongs to the protein kinase superfamily. STE Ser/Thr protein kinase family. STE20 subfamily.</text>
</comment>
<comment type="sequence caution" evidence="13">
    <conflict type="miscellaneous discrepancy">
        <sequence resource="EMBL-CDS" id="AAA20968"/>
    </conflict>
    <text>Contaminating sequence. Sequence of unknown origin in the N-terminal part.</text>
</comment>
<feature type="chain" id="PRO_0000086275" description="Mitogen-activated protein kinase kinase kinase kinase 2">
    <location>
        <begin position="1"/>
        <end position="820"/>
    </location>
</feature>
<feature type="domain" description="Protein kinase" evidence="2">
    <location>
        <begin position="16"/>
        <end position="273"/>
    </location>
</feature>
<feature type="domain" description="CNH" evidence="3">
    <location>
        <begin position="482"/>
        <end position="793"/>
    </location>
</feature>
<feature type="region of interest" description="PEST1">
    <location>
        <begin position="294"/>
        <end position="314"/>
    </location>
</feature>
<feature type="region of interest" description="PEST2">
    <location>
        <begin position="344"/>
        <end position="360"/>
    </location>
</feature>
<feature type="region of interest" description="Disordered" evidence="4">
    <location>
        <begin position="387"/>
        <end position="442"/>
    </location>
</feature>
<feature type="region of interest" description="PEST3">
    <location>
        <begin position="405"/>
        <end position="448"/>
    </location>
</feature>
<feature type="compositionally biased region" description="Pro residues" evidence="4">
    <location>
        <begin position="422"/>
        <end position="434"/>
    </location>
</feature>
<feature type="active site" description="Proton acceptor" evidence="2">
    <location>
        <position position="136"/>
    </location>
</feature>
<feature type="binding site" evidence="2">
    <location>
        <begin position="22"/>
        <end position="30"/>
    </location>
    <ligand>
        <name>ATP</name>
        <dbReference type="ChEBI" id="CHEBI:30616"/>
    </ligand>
</feature>
<feature type="binding site" evidence="2">
    <location>
        <position position="45"/>
    </location>
    <ligand>
        <name>ATP</name>
        <dbReference type="ChEBI" id="CHEBI:30616"/>
    </ligand>
</feature>
<feature type="modified residue" description="Phosphoserine" evidence="19">
    <location>
        <position position="328"/>
    </location>
</feature>
<feature type="modified residue" description="Phosphoserine" evidence="16 17 18 19">
    <location>
        <position position="394"/>
    </location>
</feature>
<feature type="splice variant" id="VSP_054134" description="In isoform 2." evidence="12">
    <location>
        <begin position="426"/>
        <end position="433"/>
    </location>
</feature>
<feature type="sequence conflict" description="In Ref. 4; AAA20968." evidence="13" ref="4">
    <original>A</original>
    <variation>R</variation>
    <location>
        <position position="120"/>
    </location>
</feature>
<dbReference type="EC" id="2.7.11.1" evidence="10"/>
<dbReference type="EMBL" id="AP001462">
    <property type="status" value="NOT_ANNOTATED_CDS"/>
    <property type="molecule type" value="Genomic_DNA"/>
</dbReference>
<dbReference type="EMBL" id="CH471076">
    <property type="protein sequence ID" value="EAW74302.1"/>
    <property type="molecule type" value="Genomic_DNA"/>
</dbReference>
<dbReference type="EMBL" id="BC047865">
    <property type="protein sequence ID" value="AAH47865.1"/>
    <property type="molecule type" value="mRNA"/>
</dbReference>
<dbReference type="EMBL" id="U07349">
    <property type="protein sequence ID" value="AAA20968.1"/>
    <property type="status" value="ALT_SEQ"/>
    <property type="molecule type" value="mRNA"/>
</dbReference>
<dbReference type="CCDS" id="CCDS8082.1">
    <molecule id="Q12851-1"/>
</dbReference>
<dbReference type="CCDS" id="CCDS81582.1">
    <molecule id="Q12851-2"/>
</dbReference>
<dbReference type="PIR" id="A53714">
    <property type="entry name" value="A53714"/>
</dbReference>
<dbReference type="RefSeq" id="NP_001294919.1">
    <molecule id="Q12851-2"/>
    <property type="nucleotide sequence ID" value="NM_001307990.2"/>
</dbReference>
<dbReference type="RefSeq" id="NP_004570.2">
    <molecule id="Q12851-1"/>
    <property type="nucleotide sequence ID" value="NM_004579.4"/>
</dbReference>
<dbReference type="SMR" id="Q12851"/>
<dbReference type="BioGRID" id="111809">
    <property type="interactions" value="99"/>
</dbReference>
<dbReference type="FunCoup" id="Q12851">
    <property type="interactions" value="1076"/>
</dbReference>
<dbReference type="IntAct" id="Q12851">
    <property type="interactions" value="30"/>
</dbReference>
<dbReference type="MINT" id="Q12851"/>
<dbReference type="STRING" id="9606.ENSP00000294066"/>
<dbReference type="BindingDB" id="Q12851"/>
<dbReference type="ChEMBL" id="CHEMBL5330"/>
<dbReference type="DrugBank" id="DB12010">
    <property type="generic name" value="Fostamatinib"/>
</dbReference>
<dbReference type="DrugCentral" id="Q12851"/>
<dbReference type="GuidetoPHARMACOLOGY" id="2086"/>
<dbReference type="iPTMnet" id="Q12851"/>
<dbReference type="PhosphoSitePlus" id="Q12851"/>
<dbReference type="BioMuta" id="MAP4K2"/>
<dbReference type="DMDM" id="215274019"/>
<dbReference type="CPTAC" id="CPTAC-2864"/>
<dbReference type="CPTAC" id="CPTAC-2865"/>
<dbReference type="CPTAC" id="CPTAC-862"/>
<dbReference type="CPTAC" id="CPTAC-863"/>
<dbReference type="jPOST" id="Q12851"/>
<dbReference type="MassIVE" id="Q12851"/>
<dbReference type="PaxDb" id="9606-ENSP00000294066"/>
<dbReference type="PeptideAtlas" id="Q12851"/>
<dbReference type="ProteomicsDB" id="58984">
    <molecule id="Q12851-1"/>
</dbReference>
<dbReference type="ProteomicsDB" id="70069"/>
<dbReference type="Pumba" id="Q12851"/>
<dbReference type="Antibodypedia" id="2060">
    <property type="antibodies" value="243 antibodies from 28 providers"/>
</dbReference>
<dbReference type="DNASU" id="5871"/>
<dbReference type="Ensembl" id="ENST00000294066.7">
    <molecule id="Q12851-1"/>
    <property type="protein sequence ID" value="ENSP00000294066.2"/>
    <property type="gene ID" value="ENSG00000168067.12"/>
</dbReference>
<dbReference type="Ensembl" id="ENST00000377350.7">
    <molecule id="Q12851-2"/>
    <property type="protein sequence ID" value="ENSP00000366567.3"/>
    <property type="gene ID" value="ENSG00000168067.12"/>
</dbReference>
<dbReference type="GeneID" id="5871"/>
<dbReference type="KEGG" id="hsa:5871"/>
<dbReference type="MANE-Select" id="ENST00000294066.7">
    <property type="protein sequence ID" value="ENSP00000294066.2"/>
    <property type="RefSeq nucleotide sequence ID" value="NM_004579.5"/>
    <property type="RefSeq protein sequence ID" value="NP_004570.2"/>
</dbReference>
<dbReference type="UCSC" id="uc001obh.4">
    <molecule id="Q12851-1"/>
    <property type="organism name" value="human"/>
</dbReference>
<dbReference type="AGR" id="HGNC:6864"/>
<dbReference type="CTD" id="5871"/>
<dbReference type="DisGeNET" id="5871"/>
<dbReference type="GeneCards" id="MAP4K2"/>
<dbReference type="HGNC" id="HGNC:6864">
    <property type="gene designation" value="MAP4K2"/>
</dbReference>
<dbReference type="HPA" id="ENSG00000168067">
    <property type="expression patterns" value="Low tissue specificity"/>
</dbReference>
<dbReference type="MalaCards" id="MAP4K2"/>
<dbReference type="MIM" id="603166">
    <property type="type" value="gene"/>
</dbReference>
<dbReference type="neXtProt" id="NX_Q12851"/>
<dbReference type="OpenTargets" id="ENSG00000168067"/>
<dbReference type="PharmGKB" id="PA30610"/>
<dbReference type="VEuPathDB" id="HostDB:ENSG00000168067"/>
<dbReference type="eggNOG" id="KOG0576">
    <property type="taxonomic scope" value="Eukaryota"/>
</dbReference>
<dbReference type="GeneTree" id="ENSGT00940000162250"/>
<dbReference type="InParanoid" id="Q12851"/>
<dbReference type="OMA" id="EWATMKK"/>
<dbReference type="OrthoDB" id="8693905at2759"/>
<dbReference type="PAN-GO" id="Q12851">
    <property type="GO annotations" value="4 GO annotations based on evolutionary models"/>
</dbReference>
<dbReference type="PhylomeDB" id="Q12851"/>
<dbReference type="TreeFam" id="TF105121"/>
<dbReference type="PathwayCommons" id="Q12851"/>
<dbReference type="SignaLink" id="Q12851"/>
<dbReference type="SIGNOR" id="Q12851"/>
<dbReference type="BioGRID-ORCS" id="5871">
    <property type="hits" value="37 hits in 1162 CRISPR screens"/>
</dbReference>
<dbReference type="GeneWiki" id="MAP4K2"/>
<dbReference type="GenomeRNAi" id="5871"/>
<dbReference type="Pharos" id="Q12851">
    <property type="development level" value="Tchem"/>
</dbReference>
<dbReference type="PRO" id="PR:Q12851"/>
<dbReference type="Proteomes" id="UP000005640">
    <property type="component" value="Chromosome 11"/>
</dbReference>
<dbReference type="RNAct" id="Q12851">
    <property type="molecule type" value="protein"/>
</dbReference>
<dbReference type="Bgee" id="ENSG00000168067">
    <property type="expression patterns" value="Expressed in granulocyte and 118 other cell types or tissues"/>
</dbReference>
<dbReference type="ExpressionAtlas" id="Q12851">
    <property type="expression patterns" value="baseline and differential"/>
</dbReference>
<dbReference type="GO" id="GO:0016323">
    <property type="term" value="C:basolateral plasma membrane"/>
    <property type="evidence" value="ECO:0007669"/>
    <property type="project" value="UniProtKB-SubCell"/>
</dbReference>
<dbReference type="GO" id="GO:0005737">
    <property type="term" value="C:cytoplasm"/>
    <property type="evidence" value="ECO:0000318"/>
    <property type="project" value="GO_Central"/>
</dbReference>
<dbReference type="GO" id="GO:0000139">
    <property type="term" value="C:Golgi membrane"/>
    <property type="evidence" value="ECO:0000304"/>
    <property type="project" value="ProtInc"/>
</dbReference>
<dbReference type="GO" id="GO:0005524">
    <property type="term" value="F:ATP binding"/>
    <property type="evidence" value="ECO:0000314"/>
    <property type="project" value="UniProtKB"/>
</dbReference>
<dbReference type="GO" id="GO:0008349">
    <property type="term" value="F:MAP kinase kinase kinase kinase activity"/>
    <property type="evidence" value="ECO:0000318"/>
    <property type="project" value="GO_Central"/>
</dbReference>
<dbReference type="GO" id="GO:0031435">
    <property type="term" value="F:mitogen-activated protein kinase kinase kinase binding"/>
    <property type="evidence" value="ECO:0000353"/>
    <property type="project" value="UniProtKB"/>
</dbReference>
<dbReference type="GO" id="GO:0106310">
    <property type="term" value="F:protein serine kinase activity"/>
    <property type="evidence" value="ECO:0007669"/>
    <property type="project" value="RHEA"/>
</dbReference>
<dbReference type="GO" id="GO:0004674">
    <property type="term" value="F:protein serine/threonine kinase activity"/>
    <property type="evidence" value="ECO:0000314"/>
    <property type="project" value="UniProtKB"/>
</dbReference>
<dbReference type="GO" id="GO:0006955">
    <property type="term" value="P:immune response"/>
    <property type="evidence" value="ECO:0000304"/>
    <property type="project" value="ProtInc"/>
</dbReference>
<dbReference type="GO" id="GO:0045087">
    <property type="term" value="P:innate immune response"/>
    <property type="evidence" value="ECO:0007669"/>
    <property type="project" value="UniProtKB-KW"/>
</dbReference>
<dbReference type="GO" id="GO:0035556">
    <property type="term" value="P:intracellular signal transduction"/>
    <property type="evidence" value="ECO:0000314"/>
    <property type="project" value="UniProtKB"/>
</dbReference>
<dbReference type="GO" id="GO:0007254">
    <property type="term" value="P:JNK cascade"/>
    <property type="evidence" value="ECO:0000304"/>
    <property type="project" value="ProtInc"/>
</dbReference>
<dbReference type="GO" id="GO:0046330">
    <property type="term" value="P:positive regulation of JNK cascade"/>
    <property type="evidence" value="ECO:0000314"/>
    <property type="project" value="UniProtKB"/>
</dbReference>
<dbReference type="GO" id="GO:0043507">
    <property type="term" value="P:positive regulation of JUN kinase activity"/>
    <property type="evidence" value="ECO:0000314"/>
    <property type="project" value="UniProtKB"/>
</dbReference>
<dbReference type="GO" id="GO:0006468">
    <property type="term" value="P:protein phosphorylation"/>
    <property type="evidence" value="ECO:0000314"/>
    <property type="project" value="UniProtKB"/>
</dbReference>
<dbReference type="GO" id="GO:0006903">
    <property type="term" value="P:vesicle targeting"/>
    <property type="evidence" value="ECO:0007669"/>
    <property type="project" value="Ensembl"/>
</dbReference>
<dbReference type="CDD" id="cd06613">
    <property type="entry name" value="STKc_MAP4K3_like"/>
    <property type="match status" value="1"/>
</dbReference>
<dbReference type="FunFam" id="1.10.510.10:FF:000031">
    <property type="entry name" value="Mitogen-activated protein kinase kinase kinase kinase"/>
    <property type="match status" value="1"/>
</dbReference>
<dbReference type="Gene3D" id="1.10.510.10">
    <property type="entry name" value="Transferase(Phosphotransferase) domain 1"/>
    <property type="match status" value="1"/>
</dbReference>
<dbReference type="InterPro" id="IPR001180">
    <property type="entry name" value="CNH_dom"/>
</dbReference>
<dbReference type="InterPro" id="IPR011009">
    <property type="entry name" value="Kinase-like_dom_sf"/>
</dbReference>
<dbReference type="InterPro" id="IPR021160">
    <property type="entry name" value="MAPKKKK"/>
</dbReference>
<dbReference type="InterPro" id="IPR000719">
    <property type="entry name" value="Prot_kinase_dom"/>
</dbReference>
<dbReference type="InterPro" id="IPR017441">
    <property type="entry name" value="Protein_kinase_ATP_BS"/>
</dbReference>
<dbReference type="InterPro" id="IPR050629">
    <property type="entry name" value="STE20/SPS1-PAK"/>
</dbReference>
<dbReference type="PANTHER" id="PTHR48012:SF6">
    <property type="entry name" value="MITOGEN-ACTIVATED PROTEIN KINASE KINASE KINASE KINASE 2"/>
    <property type="match status" value="1"/>
</dbReference>
<dbReference type="PANTHER" id="PTHR48012">
    <property type="entry name" value="STERILE20-LIKE KINASE, ISOFORM B-RELATED"/>
    <property type="match status" value="1"/>
</dbReference>
<dbReference type="Pfam" id="PF00780">
    <property type="entry name" value="CNH"/>
    <property type="match status" value="1"/>
</dbReference>
<dbReference type="Pfam" id="PF00069">
    <property type="entry name" value="Pkinase"/>
    <property type="match status" value="1"/>
</dbReference>
<dbReference type="PIRSF" id="PIRSF038172">
    <property type="entry name" value="MAPKKKK"/>
    <property type="match status" value="1"/>
</dbReference>
<dbReference type="SMART" id="SM00036">
    <property type="entry name" value="CNH"/>
    <property type="match status" value="1"/>
</dbReference>
<dbReference type="SMART" id="SM00220">
    <property type="entry name" value="S_TKc"/>
    <property type="match status" value="1"/>
</dbReference>
<dbReference type="SUPFAM" id="SSF56112">
    <property type="entry name" value="Protein kinase-like (PK-like)"/>
    <property type="match status" value="1"/>
</dbReference>
<dbReference type="PROSITE" id="PS50219">
    <property type="entry name" value="CNH"/>
    <property type="match status" value="1"/>
</dbReference>
<dbReference type="PROSITE" id="PS00107">
    <property type="entry name" value="PROTEIN_KINASE_ATP"/>
    <property type="match status" value="1"/>
</dbReference>
<dbReference type="PROSITE" id="PS50011">
    <property type="entry name" value="PROTEIN_KINASE_DOM"/>
    <property type="match status" value="1"/>
</dbReference>
<keyword id="KW-0025">Alternative splicing</keyword>
<keyword id="KW-0067">ATP-binding</keyword>
<keyword id="KW-1003">Cell membrane</keyword>
<keyword id="KW-0963">Cytoplasm</keyword>
<keyword id="KW-0333">Golgi apparatus</keyword>
<keyword id="KW-0391">Immunity</keyword>
<keyword id="KW-0399">Innate immunity</keyword>
<keyword id="KW-0418">Kinase</keyword>
<keyword id="KW-0472">Membrane</keyword>
<keyword id="KW-0547">Nucleotide-binding</keyword>
<keyword id="KW-0597">Phosphoprotein</keyword>
<keyword id="KW-1267">Proteomics identification</keyword>
<keyword id="KW-1185">Reference proteome</keyword>
<keyword id="KW-0723">Serine/threonine-protein kinase</keyword>
<keyword id="KW-0346">Stress response</keyword>
<keyword id="KW-0808">Transferase</keyword>
<keyword id="KW-0832">Ubl conjugation</keyword>
<accession>Q12851</accession>
<accession>Q86VU3</accession>
<gene>
    <name evidence="15" type="primary">MAP4K2</name>
    <name type="synonym">GCK</name>
    <name type="synonym">RAB8IP</name>
</gene>
<organism evidence="14">
    <name type="scientific">Homo sapiens</name>
    <name type="common">Human</name>
    <dbReference type="NCBI Taxonomy" id="9606"/>
    <lineage>
        <taxon>Eukaryota</taxon>
        <taxon>Metazoa</taxon>
        <taxon>Chordata</taxon>
        <taxon>Craniata</taxon>
        <taxon>Vertebrata</taxon>
        <taxon>Euteleostomi</taxon>
        <taxon>Mammalia</taxon>
        <taxon>Eutheria</taxon>
        <taxon>Euarchontoglires</taxon>
        <taxon>Primates</taxon>
        <taxon>Haplorrhini</taxon>
        <taxon>Catarrhini</taxon>
        <taxon>Hominidae</taxon>
        <taxon>Homo</taxon>
    </lineage>
</organism>
<proteinExistence type="evidence at protein level"/>
<sequence length="820" mass="91556">MALLRDVSLQDPRDRFELLQRVGAGTYGDVYKARDTVTSELAAVKIVKLDPGDDISSLQQEITILRECRHPNVVAYIGSYLRNDRLWICMEFCGGGSLQEIYHATGPLEERQIAYVCREALKGLHHLHSQGKIHRDIKGANLLLTLQGDVKLADFGVSGELTASVAKRRSFIGTPYWMAPEVAAVERKGGYNELCDVWALGITAIELGELQPPLFHLHPMRALMLMSKSSFQPPKLRDKTRWTQNFHHFLKLALTKNPKKRPTAEKLLQHPFTTQQLPRALLTQLLDKASDPHLGTPSPEDCELETYDMFPDTIHSRGQHGPAERTPSEIQFHQVKFGAPRRKETDPLNEPWEEEWTLLGKEELSGSLLQSVQEALEERSLTIRSASEFQELDSPDDTMGTIKRAPFLGPLPTDPPAEEPLSSPPGTLPPPPSGPNSSPLLPTAWATMKQREDPERSSCHGLPPTPKVHMGACFSKVFNGCPLRIHAAVTWIHPVTRDQFLVVGAEEGIYTLNLHELHEDTLEKLISHRCSWLYCVNNVLLSLSGKSTHIWAHDLPGLFEQRRLQQQVPLSIPTNRLTQRIIPRRFALSTKIPDTKGCLQCRVVRNPYTGATFLLAALPTSLLLLQWYEPLQKFLLLKNFSSPLPSPAGMLEPLVLDGKELPQVCVGAEGPEGPGCRVLFHVLPLEAGLTPDILIPPEGIPGSAQQVIQVDRDTILVSFERCVRIVNMQGEPTATLAPELTFDFPIETVVCLQDSVLAFWSHGMQGRSLDTNEVTQEITDETRIFRVLGAHRDIILESIPTDNPEAHSNLYILTGHQSTY</sequence>
<reference key="1">
    <citation type="journal article" date="2006" name="Nature">
        <title>Human chromosome 11 DNA sequence and analysis including novel gene identification.</title>
        <authorList>
            <person name="Taylor T.D."/>
            <person name="Noguchi H."/>
            <person name="Totoki Y."/>
            <person name="Toyoda A."/>
            <person name="Kuroki Y."/>
            <person name="Dewar K."/>
            <person name="Lloyd C."/>
            <person name="Itoh T."/>
            <person name="Takeda T."/>
            <person name="Kim D.-W."/>
            <person name="She X."/>
            <person name="Barlow K.F."/>
            <person name="Bloom T."/>
            <person name="Bruford E."/>
            <person name="Chang J.L."/>
            <person name="Cuomo C.A."/>
            <person name="Eichler E."/>
            <person name="FitzGerald M.G."/>
            <person name="Jaffe D.B."/>
            <person name="LaButti K."/>
            <person name="Nicol R."/>
            <person name="Park H.-S."/>
            <person name="Seaman C."/>
            <person name="Sougnez C."/>
            <person name="Yang X."/>
            <person name="Zimmer A.R."/>
            <person name="Zody M.C."/>
            <person name="Birren B.W."/>
            <person name="Nusbaum C."/>
            <person name="Fujiyama A."/>
            <person name="Hattori M."/>
            <person name="Rogers J."/>
            <person name="Lander E.S."/>
            <person name="Sakaki Y."/>
        </authorList>
    </citation>
    <scope>NUCLEOTIDE SEQUENCE [LARGE SCALE GENOMIC DNA]</scope>
</reference>
<reference key="2">
    <citation type="submission" date="2005-07" db="EMBL/GenBank/DDBJ databases">
        <authorList>
            <person name="Mural R.J."/>
            <person name="Istrail S."/>
            <person name="Sutton G."/>
            <person name="Florea L."/>
            <person name="Halpern A.L."/>
            <person name="Mobarry C.M."/>
            <person name="Lippert R."/>
            <person name="Walenz B."/>
            <person name="Shatkay H."/>
            <person name="Dew I."/>
            <person name="Miller J.R."/>
            <person name="Flanigan M.J."/>
            <person name="Edwards N.J."/>
            <person name="Bolanos R."/>
            <person name="Fasulo D."/>
            <person name="Halldorsson B.V."/>
            <person name="Hannenhalli S."/>
            <person name="Turner R."/>
            <person name="Yooseph S."/>
            <person name="Lu F."/>
            <person name="Nusskern D.R."/>
            <person name="Shue B.C."/>
            <person name="Zheng X.H."/>
            <person name="Zhong F."/>
            <person name="Delcher A.L."/>
            <person name="Huson D.H."/>
            <person name="Kravitz S.A."/>
            <person name="Mouchard L."/>
            <person name="Reinert K."/>
            <person name="Remington K.A."/>
            <person name="Clark A.G."/>
            <person name="Waterman M.S."/>
            <person name="Eichler E.E."/>
            <person name="Adams M.D."/>
            <person name="Hunkapiller M.W."/>
            <person name="Myers E.W."/>
            <person name="Venter J.C."/>
        </authorList>
    </citation>
    <scope>NUCLEOTIDE SEQUENCE [LARGE SCALE GENOMIC DNA]</scope>
</reference>
<reference key="3">
    <citation type="journal article" date="2004" name="Genome Res.">
        <title>The status, quality, and expansion of the NIH full-length cDNA project: the Mammalian Gene Collection (MGC).</title>
        <authorList>
            <consortium name="The MGC Project Team"/>
        </authorList>
    </citation>
    <scope>NUCLEOTIDE SEQUENCE [LARGE SCALE MRNA] (ISOFORM 2)</scope>
    <source>
        <tissue>Uterus</tissue>
    </source>
</reference>
<reference evidence="13" key="4">
    <citation type="journal article" date="1994" name="J. Biol. Chem.">
        <title>Differential expression of a novel protein kinase in human B lymphocytes. Preferential localization in the germinal center.</title>
        <authorList>
            <person name="Katz P."/>
            <person name="Whalen G."/>
            <person name="Kehrl J.H."/>
        </authorList>
    </citation>
    <scope>NUCLEOTIDE SEQUENCE [MRNA] OF 2-820 (ISOFORM 1)</scope>
    <scope>FUNCTION</scope>
    <scope>DOMAIN</scope>
    <scope>TISSUE SPECIFICITY</scope>
    <source>
        <tissue>Tonsil</tissue>
    </source>
</reference>
<reference key="5">
    <citation type="journal article" date="1995" name="Nature">
        <title>Activation of the SAPK pathway by the human STE20 homologue germinal centre kinase.</title>
        <authorList>
            <person name="Pombo C.M."/>
            <person name="Kehrl J.H."/>
            <person name="Sanchez I."/>
            <person name="Katz P."/>
            <person name="Avruch J."/>
            <person name="Zon L.I."/>
            <person name="Woodgett J.R."/>
            <person name="Force T."/>
            <person name="Kyriakis J.M."/>
        </authorList>
    </citation>
    <scope>FUNCTION</scope>
    <scope>ACTIVITY REGULATION</scope>
</reference>
<reference key="6">
    <citation type="journal article" date="1998" name="J. Biol. Chem.">
        <title>Tumor necrosis factor signaling to stress-activated protein kinase (SAPK)/Jun NH2-terminal kinase (JNK) and p38. Germinal center kinase couples TRAF2 to mitogen-activated protein kinase/ERK kinase kinase 1 and SAPK while receptor interacting protein associates with a mitogen-activated protein kinase kinase kinase upstream of MKK6 and p38.</title>
        <authorList>
            <person name="Yuasa T."/>
            <person name="Ohno S."/>
            <person name="Kehrl J.H."/>
            <person name="Kyriakis J.M."/>
        </authorList>
    </citation>
    <scope>FUNCTION</scope>
    <scope>AUTOPHOSPHORYLATION</scope>
    <scope>INTERACTION WITH MAP3K1/MEKK1 AND TRAF2</scope>
</reference>
<reference evidence="13" key="7">
    <citation type="journal article" date="2002" name="Mol. Cell. Biol.">
        <title>Direct activation of mitogen-activated protein kinase kinase kinase MEKK1 by the Ste20p homologue GCK and the adapter protein TRAF2.</title>
        <authorList>
            <person name="Chadee D.N."/>
            <person name="Yuasa T."/>
            <person name="Kyriakis J.M."/>
        </authorList>
    </citation>
    <scope>FUNCTION</scope>
    <scope>INTERACTION WITH TRAF2 AND MAP3K1</scope>
</reference>
<reference key="8">
    <citation type="journal article" date="2004" name="Mol. Cell. Biol.">
        <title>Germinal center kinase is required for optimal Jun N-terminal kinase activation by Toll-like receptor agonists and is regulated by the ubiquitin proteasome system and agonist-induced, TRAF6-dependent stabilization.</title>
        <authorList>
            <person name="Zhong J."/>
            <person name="Kyriakis J.M."/>
        </authorList>
    </citation>
    <scope>ACTIVITY REGULATION</scope>
    <scope>FUNCTION</scope>
    <scope>UBIQUITINATION</scope>
    <scope>INTERACTION WITH TRAF6</scope>
</reference>
<reference key="9">
    <citation type="journal article" date="2007" name="J. Biol. Chem.">
        <title>Dissection of a signaling pathway by which pathogen-associated molecular patterns recruit the JNK and p38 MAPKs and trigger cytokine release.</title>
        <authorList>
            <person name="Zhong J."/>
            <person name="Kyriakis J.M."/>
        </authorList>
    </citation>
    <scope>FUNCTION</scope>
    <scope>INTERACTION WITH MAP3K11/MLK3</scope>
</reference>
<reference key="10">
    <citation type="journal article" date="1999" name="J. Biol. Chem.">
        <title>Signaling by the germinal center kinase family of protein kinases.</title>
        <authorList>
            <person name="Kyriakis J.M."/>
        </authorList>
    </citation>
    <scope>REVIEW ON FUNCTION</scope>
</reference>
<reference key="11">
    <citation type="journal article" date="2001" name="Trends Cell Biol.">
        <title>The Ste20 group kinases as regulators of MAP kinase cascades.</title>
        <authorList>
            <person name="Dan I."/>
            <person name="Watanabe N.M."/>
            <person name="Kusumi A."/>
        </authorList>
    </citation>
    <scope>REVIEW ON FUNCTION</scope>
</reference>
<reference key="12">
    <citation type="journal article" date="2008" name="Proc. Natl. Acad. Sci. U.S.A.">
        <title>A quantitative atlas of mitotic phosphorylation.</title>
        <authorList>
            <person name="Dephoure N."/>
            <person name="Zhou C."/>
            <person name="Villen J."/>
            <person name="Beausoleil S.A."/>
            <person name="Bakalarski C.E."/>
            <person name="Elledge S.J."/>
            <person name="Gygi S.P."/>
        </authorList>
    </citation>
    <scope>PHOSPHORYLATION [LARGE SCALE ANALYSIS] AT SER-394</scope>
    <scope>IDENTIFICATION BY MASS SPECTROMETRY [LARGE SCALE ANALYSIS]</scope>
    <source>
        <tissue>Cervix carcinoma</tissue>
    </source>
</reference>
<reference key="13">
    <citation type="journal article" date="2009" name="Mol. Cell. Proteomics">
        <title>Large-scale proteomics analysis of the human kinome.</title>
        <authorList>
            <person name="Oppermann F.S."/>
            <person name="Gnad F."/>
            <person name="Olsen J.V."/>
            <person name="Hornberger R."/>
            <person name="Greff Z."/>
            <person name="Keri G."/>
            <person name="Mann M."/>
            <person name="Daub H."/>
        </authorList>
    </citation>
    <scope>PHOSPHORYLATION [LARGE SCALE ANALYSIS] AT SER-394</scope>
    <scope>IDENTIFICATION BY MASS SPECTROMETRY [LARGE SCALE ANALYSIS]</scope>
</reference>
<reference key="14">
    <citation type="journal article" date="2009" name="Sci. Signal.">
        <title>Quantitative phosphoproteomic analysis of T cell receptor signaling reveals system-wide modulation of protein-protein interactions.</title>
        <authorList>
            <person name="Mayya V."/>
            <person name="Lundgren D.H."/>
            <person name="Hwang S.-I."/>
            <person name="Rezaul K."/>
            <person name="Wu L."/>
            <person name="Eng J.K."/>
            <person name="Rodionov V."/>
            <person name="Han D.K."/>
        </authorList>
    </citation>
    <scope>PHOSPHORYLATION [LARGE SCALE ANALYSIS] AT SER-394</scope>
    <scope>IDENTIFICATION BY MASS SPECTROMETRY [LARGE SCALE ANALYSIS]</scope>
    <source>
        <tissue>Leukemic T-cell</tissue>
    </source>
</reference>
<reference key="15">
    <citation type="journal article" date="2013" name="J. Proteome Res.">
        <title>Toward a comprehensive characterization of a human cancer cell phosphoproteome.</title>
        <authorList>
            <person name="Zhou H."/>
            <person name="Di Palma S."/>
            <person name="Preisinger C."/>
            <person name="Peng M."/>
            <person name="Polat A.N."/>
            <person name="Heck A.J."/>
            <person name="Mohammed S."/>
        </authorList>
    </citation>
    <scope>PHOSPHORYLATION [LARGE SCALE ANALYSIS] AT SER-328 AND SER-394</scope>
    <scope>IDENTIFICATION BY MASS SPECTROMETRY [LARGE SCALE ANALYSIS]</scope>
    <source>
        <tissue>Cervix carcinoma</tissue>
        <tissue>Erythroleukemia</tissue>
    </source>
</reference>
<reference key="16">
    <citation type="journal article" date="2014" name="J. Proteomics">
        <title>An enzyme assisted RP-RPLC approach for in-depth analysis of human liver phosphoproteome.</title>
        <authorList>
            <person name="Bian Y."/>
            <person name="Song C."/>
            <person name="Cheng K."/>
            <person name="Dong M."/>
            <person name="Wang F."/>
            <person name="Huang J."/>
            <person name="Sun D."/>
            <person name="Wang L."/>
            <person name="Ye M."/>
            <person name="Zou H."/>
        </authorList>
    </citation>
    <scope>IDENTIFICATION BY MASS SPECTROMETRY [LARGE SCALE ANALYSIS]</scope>
    <source>
        <tissue>Liver</tissue>
    </source>
</reference>
<reference key="17">
    <citation type="journal article" date="2015" name="Nat. Commun.">
        <title>MAP4K family kinases act in parallel to MST1/2 to activate LATS1/2 in the Hippo pathway.</title>
        <authorList>
            <person name="Meng Z."/>
            <person name="Moroishi T."/>
            <person name="Mottier-Pavie V."/>
            <person name="Plouffe S.W."/>
            <person name="Hansen C.G."/>
            <person name="Hong A.W."/>
            <person name="Park H.W."/>
            <person name="Mo J.S."/>
            <person name="Lu W."/>
            <person name="Lu S."/>
            <person name="Flores F."/>
            <person name="Yu F.X."/>
            <person name="Halder G."/>
            <person name="Guan K.L."/>
        </authorList>
    </citation>
    <scope>FUNCTION</scope>
</reference>
<evidence type="ECO:0000250" key="1"/>
<evidence type="ECO:0000255" key="2">
    <source>
        <dbReference type="PROSITE-ProRule" id="PRU00159"/>
    </source>
</evidence>
<evidence type="ECO:0000255" key="3">
    <source>
        <dbReference type="PROSITE-ProRule" id="PRU00795"/>
    </source>
</evidence>
<evidence type="ECO:0000256" key="4">
    <source>
        <dbReference type="SAM" id="MobiDB-lite"/>
    </source>
</evidence>
<evidence type="ECO:0000269" key="5">
    <source>
    </source>
</evidence>
<evidence type="ECO:0000269" key="6">
    <source>
    </source>
</evidence>
<evidence type="ECO:0000269" key="7">
    <source>
    </source>
</evidence>
<evidence type="ECO:0000269" key="8">
    <source>
    </source>
</evidence>
<evidence type="ECO:0000269" key="9">
    <source>
    </source>
</evidence>
<evidence type="ECO:0000269" key="10">
    <source>
    </source>
</evidence>
<evidence type="ECO:0000269" key="11">
    <source>
    </source>
</evidence>
<evidence type="ECO:0000303" key="12">
    <source>
    </source>
</evidence>
<evidence type="ECO:0000305" key="13"/>
<evidence type="ECO:0000312" key="14">
    <source>
        <dbReference type="EMBL" id="AAA20968.1"/>
    </source>
</evidence>
<evidence type="ECO:0000312" key="15">
    <source>
        <dbReference type="HGNC" id="HGNC:6864"/>
    </source>
</evidence>
<evidence type="ECO:0007744" key="16">
    <source>
    </source>
</evidence>
<evidence type="ECO:0007744" key="17">
    <source>
    </source>
</evidence>
<evidence type="ECO:0007744" key="18">
    <source>
    </source>
</evidence>
<evidence type="ECO:0007744" key="19">
    <source>
    </source>
</evidence>